<accession>Q5AML2</accession>
<accession>A0A1D8PLC0</accession>
<keyword id="KW-0963">Cytoplasm</keyword>
<keyword id="KW-1185">Reference proteome</keyword>
<keyword id="KW-0694">RNA-binding</keyword>
<keyword id="KW-0808">Transferase</keyword>
<keyword id="KW-0819">tRNA processing</keyword>
<keyword id="KW-0820">tRNA-binding</keyword>
<evidence type="ECO:0000255" key="1">
    <source>
        <dbReference type="HAMAP-Rule" id="MF_03053"/>
    </source>
</evidence>
<evidence type="ECO:0000256" key="2">
    <source>
        <dbReference type="SAM" id="MobiDB-lite"/>
    </source>
</evidence>
<protein>
    <recommendedName>
        <fullName evidence="1">Cytoplasmic tRNA 2-thiolation protein 1</fullName>
        <ecNumber evidence="1">2.7.7.-</ecNumber>
    </recommendedName>
    <alternativeName>
        <fullName evidence="1">Cytoplasmic tRNA adenylyltransferase 1</fullName>
    </alternativeName>
</protein>
<gene>
    <name evidence="1" type="primary">NCS6</name>
    <name evidence="1" type="synonym">CTU1</name>
    <name type="ordered locus">CAALFM_C401500WA</name>
    <name type="ORF">CaO19.12104</name>
    <name type="ORF">CaO19.4634</name>
</gene>
<comment type="function">
    <text evidence="1">Plays a central role in 2-thiolation of mcm(5)S(2)U at tRNA wobble positions of tRNA(Lys), tRNA(Glu) and tRNA(Gln). Directly binds tRNAs and probably acts by catalyzing adenylation of tRNAs, an intermediate required for 2-thiolation. It is unclear whether it acts as a sulfurtransferase that transfers sulfur from thiocarboxylated URM1 onto the uridine of tRNAs at wobble position. Prior mcm(5) tRNA modification by the elongator complex is required for 2-thiolation. May also be involved in protein urmylation.</text>
</comment>
<comment type="pathway">
    <text evidence="1">tRNA modification; 5-methoxycarbonylmethyl-2-thiouridine-tRNA biosynthesis.</text>
</comment>
<comment type="subcellular location">
    <subcellularLocation>
        <location evidence="1">Cytoplasm</location>
    </subcellularLocation>
</comment>
<comment type="similarity">
    <text evidence="1">Belongs to the TtcA family. CTU1/NCS6/ATPBD3 subfamily.</text>
</comment>
<sequence length="395" mass="44412">MPESTNTIINSSVKKIKLSALCELCHGRKAVMKRPKNLMKLCKECFYNIFETEIHNTIISNDLFYRGEKIAIGASGGKDSTVLASILKTLNERYDYGLNLVLLSIDEGIKGYRDDSLATVKRNQKQYDMPLEIVSYKDLYNWSMDEIVACAGIRSSCTYCGVLRRQALDRGAEKLGIKHVVTGHNADDVAETVLMNLLRGDVARLESSTNIMTTSAGSPIKRSKPFKYTYQKEIVLYAHYKKLDYFSTECTYAPEAFRGTARELLKSLESIRPSCIMDIIYSGEHLVLAPKKQKRKTVAYKNKNKNKKKSNSEQEEQEKQEQEVNPDGSISLNRNGIKKDGNTCEKCGYLSSNKICKACMLLNGLEINRAKVTIDNNSAIDGAAKLTKKLEQLSF</sequence>
<feature type="chain" id="PRO_0000368258" description="Cytoplasmic tRNA 2-thiolation protein 1">
    <location>
        <begin position="1"/>
        <end position="395"/>
    </location>
</feature>
<feature type="region of interest" description="Disordered" evidence="2">
    <location>
        <begin position="297"/>
        <end position="335"/>
    </location>
</feature>
<feature type="compositionally biased region" description="Basic residues" evidence="2">
    <location>
        <begin position="297"/>
        <end position="309"/>
    </location>
</feature>
<name>CTU1_CANAL</name>
<reference key="1">
    <citation type="journal article" date="2004" name="Proc. Natl. Acad. Sci. U.S.A.">
        <title>The diploid genome sequence of Candida albicans.</title>
        <authorList>
            <person name="Jones T."/>
            <person name="Federspiel N.A."/>
            <person name="Chibana H."/>
            <person name="Dungan J."/>
            <person name="Kalman S."/>
            <person name="Magee B.B."/>
            <person name="Newport G."/>
            <person name="Thorstenson Y.R."/>
            <person name="Agabian N."/>
            <person name="Magee P.T."/>
            <person name="Davis R.W."/>
            <person name="Scherer S."/>
        </authorList>
    </citation>
    <scope>NUCLEOTIDE SEQUENCE [LARGE SCALE GENOMIC DNA]</scope>
    <source>
        <strain>SC5314 / ATCC MYA-2876</strain>
    </source>
</reference>
<reference key="2">
    <citation type="journal article" date="2007" name="Genome Biol.">
        <title>Assembly of the Candida albicans genome into sixteen supercontigs aligned on the eight chromosomes.</title>
        <authorList>
            <person name="van het Hoog M."/>
            <person name="Rast T.J."/>
            <person name="Martchenko M."/>
            <person name="Grindle S."/>
            <person name="Dignard D."/>
            <person name="Hogues H."/>
            <person name="Cuomo C."/>
            <person name="Berriman M."/>
            <person name="Scherer S."/>
            <person name="Magee B.B."/>
            <person name="Whiteway M."/>
            <person name="Chibana H."/>
            <person name="Nantel A."/>
            <person name="Magee P.T."/>
        </authorList>
    </citation>
    <scope>GENOME REANNOTATION</scope>
    <source>
        <strain>SC5314 / ATCC MYA-2876</strain>
    </source>
</reference>
<reference key="3">
    <citation type="journal article" date="2013" name="Genome Biol.">
        <title>Assembly of a phased diploid Candida albicans genome facilitates allele-specific measurements and provides a simple model for repeat and indel structure.</title>
        <authorList>
            <person name="Muzzey D."/>
            <person name="Schwartz K."/>
            <person name="Weissman J.S."/>
            <person name="Sherlock G."/>
        </authorList>
    </citation>
    <scope>NUCLEOTIDE SEQUENCE [LARGE SCALE GENOMIC DNA]</scope>
    <scope>GENOME REANNOTATION</scope>
    <source>
        <strain>SC5314 / ATCC MYA-2876</strain>
    </source>
</reference>
<organism>
    <name type="scientific">Candida albicans (strain SC5314 / ATCC MYA-2876)</name>
    <name type="common">Yeast</name>
    <dbReference type="NCBI Taxonomy" id="237561"/>
    <lineage>
        <taxon>Eukaryota</taxon>
        <taxon>Fungi</taxon>
        <taxon>Dikarya</taxon>
        <taxon>Ascomycota</taxon>
        <taxon>Saccharomycotina</taxon>
        <taxon>Pichiomycetes</taxon>
        <taxon>Debaryomycetaceae</taxon>
        <taxon>Candida/Lodderomyces clade</taxon>
        <taxon>Candida</taxon>
    </lineage>
</organism>
<dbReference type="EC" id="2.7.7.-" evidence="1"/>
<dbReference type="EMBL" id="CP017626">
    <property type="protein sequence ID" value="AOW28931.1"/>
    <property type="molecule type" value="Genomic_DNA"/>
</dbReference>
<dbReference type="RefSeq" id="XP_722706.2">
    <property type="nucleotide sequence ID" value="XM_717613.2"/>
</dbReference>
<dbReference type="SMR" id="Q5AML2"/>
<dbReference type="BioGRID" id="1218528">
    <property type="interactions" value="1"/>
</dbReference>
<dbReference type="FunCoup" id="Q5AML2">
    <property type="interactions" value="482"/>
</dbReference>
<dbReference type="STRING" id="237561.Q5AML2"/>
<dbReference type="EnsemblFungi" id="C4_01500W_A-T">
    <property type="protein sequence ID" value="C4_01500W_A-T-p1"/>
    <property type="gene ID" value="C4_01500W_A"/>
</dbReference>
<dbReference type="GeneID" id="3635617"/>
<dbReference type="KEGG" id="cal:CAALFM_C401500WA"/>
<dbReference type="CGD" id="CAL0000179269">
    <property type="gene designation" value="orf19.12104"/>
</dbReference>
<dbReference type="VEuPathDB" id="FungiDB:C4_01500W_A"/>
<dbReference type="eggNOG" id="KOG2840">
    <property type="taxonomic scope" value="Eukaryota"/>
</dbReference>
<dbReference type="HOGENOM" id="CLU_026481_1_3_1"/>
<dbReference type="InParanoid" id="Q5AML2"/>
<dbReference type="OrthoDB" id="198857at2759"/>
<dbReference type="UniPathway" id="UPA00988"/>
<dbReference type="PRO" id="PR:Q5AML2"/>
<dbReference type="Proteomes" id="UP000000559">
    <property type="component" value="Chromosome 4"/>
</dbReference>
<dbReference type="GO" id="GO:0005829">
    <property type="term" value="C:cytosol"/>
    <property type="evidence" value="ECO:0000250"/>
    <property type="project" value="UniProtKB"/>
</dbReference>
<dbReference type="GO" id="GO:0002144">
    <property type="term" value="C:cytosolic tRNA wobble base thiouridylase complex"/>
    <property type="evidence" value="ECO:0000318"/>
    <property type="project" value="GO_Central"/>
</dbReference>
<dbReference type="GO" id="GO:0016779">
    <property type="term" value="F:nucleotidyltransferase activity"/>
    <property type="evidence" value="ECO:0007669"/>
    <property type="project" value="UniProtKB-UniRule"/>
</dbReference>
<dbReference type="GO" id="GO:0000049">
    <property type="term" value="F:tRNA binding"/>
    <property type="evidence" value="ECO:0000250"/>
    <property type="project" value="UniProtKB"/>
</dbReference>
<dbReference type="GO" id="GO:0103016">
    <property type="term" value="F:tRNA-uridine 2-sulfurtransferase activity"/>
    <property type="evidence" value="ECO:0007669"/>
    <property type="project" value="EnsemblFungi"/>
</dbReference>
<dbReference type="GO" id="GO:0032447">
    <property type="term" value="P:protein urmylation"/>
    <property type="evidence" value="ECO:0007669"/>
    <property type="project" value="UniProtKB-UniRule"/>
</dbReference>
<dbReference type="GO" id="GO:0034227">
    <property type="term" value="P:tRNA thio-modification"/>
    <property type="evidence" value="ECO:0000250"/>
    <property type="project" value="UniProtKB"/>
</dbReference>
<dbReference type="GO" id="GO:0002143">
    <property type="term" value="P:tRNA wobble position uridine thiolation"/>
    <property type="evidence" value="ECO:0000318"/>
    <property type="project" value="GO_Central"/>
</dbReference>
<dbReference type="GO" id="GO:0002098">
    <property type="term" value="P:tRNA wobble uridine modification"/>
    <property type="evidence" value="ECO:0000250"/>
    <property type="project" value="UniProtKB"/>
</dbReference>
<dbReference type="CDD" id="cd01713">
    <property type="entry name" value="CTU1-like"/>
    <property type="match status" value="1"/>
</dbReference>
<dbReference type="Gene3D" id="3.40.50.620">
    <property type="entry name" value="HUPs"/>
    <property type="match status" value="1"/>
</dbReference>
<dbReference type="HAMAP" id="MF_03053">
    <property type="entry name" value="CTU1"/>
    <property type="match status" value="1"/>
</dbReference>
<dbReference type="InterPro" id="IPR056369">
    <property type="entry name" value="CTU1-like_ATP-bd"/>
</dbReference>
<dbReference type="InterPro" id="IPR032442">
    <property type="entry name" value="CTU1_C"/>
</dbReference>
<dbReference type="InterPro" id="IPR000541">
    <property type="entry name" value="Ncs6/Tuc1/Ctu1"/>
</dbReference>
<dbReference type="InterPro" id="IPR014729">
    <property type="entry name" value="Rossmann-like_a/b/a_fold"/>
</dbReference>
<dbReference type="InterPro" id="IPR011063">
    <property type="entry name" value="TilS/TtcA_N"/>
</dbReference>
<dbReference type="InterPro" id="IPR035107">
    <property type="entry name" value="tRNA_thiolation_TtcA_Ctu1"/>
</dbReference>
<dbReference type="InterPro" id="IPR020554">
    <property type="entry name" value="UPF0021_CS"/>
</dbReference>
<dbReference type="PANTHER" id="PTHR11807">
    <property type="entry name" value="ATPASES OF THE PP SUPERFAMILY-RELATED"/>
    <property type="match status" value="1"/>
</dbReference>
<dbReference type="PANTHER" id="PTHR11807:SF12">
    <property type="entry name" value="CYTOPLASMIC TRNA 2-THIOLATION PROTEIN 1"/>
    <property type="match status" value="1"/>
</dbReference>
<dbReference type="Pfam" id="PF01171">
    <property type="entry name" value="ATP_bind_3"/>
    <property type="match status" value="1"/>
</dbReference>
<dbReference type="Pfam" id="PF16503">
    <property type="entry name" value="zn-ribbon_14"/>
    <property type="match status" value="1"/>
</dbReference>
<dbReference type="PIRSF" id="PIRSF004976">
    <property type="entry name" value="ATPase_YdaO"/>
    <property type="match status" value="1"/>
</dbReference>
<dbReference type="SUPFAM" id="SSF52402">
    <property type="entry name" value="Adenine nucleotide alpha hydrolases-like"/>
    <property type="match status" value="1"/>
</dbReference>
<dbReference type="PROSITE" id="PS01263">
    <property type="entry name" value="UPF0021"/>
    <property type="match status" value="1"/>
</dbReference>
<proteinExistence type="inferred from homology"/>